<feature type="chain" id="PRO_0000295967" description="Small ribosomal subunit protein uS12">
    <location>
        <begin position="1"/>
        <end position="125"/>
    </location>
</feature>
<feature type="modified residue" description="3-methylthioaspartic acid" evidence="1">
    <location>
        <position position="89"/>
    </location>
</feature>
<gene>
    <name evidence="2" type="primary">rpsL</name>
    <name type="ordered locus">NT01CX_1110</name>
</gene>
<protein>
    <recommendedName>
        <fullName evidence="2">Small ribosomal subunit protein uS12</fullName>
    </recommendedName>
    <alternativeName>
        <fullName evidence="3">30S ribosomal protein S12</fullName>
    </alternativeName>
</protein>
<name>RS12_CLONN</name>
<comment type="function">
    <text evidence="2">With S4 and S5 plays an important role in translational accuracy.</text>
</comment>
<comment type="function">
    <text evidence="2">Interacts with and stabilizes bases of the 16S rRNA that are involved in tRNA selection in the A site and with the mRNA backbone. Located at the interface of the 30S and 50S subunits, it traverses the body of the 30S subunit contacting proteins on the other side and probably holding the rRNA structure together. The combined cluster of proteins S8, S12 and S17 appears to hold together the shoulder and platform of the 30S subunit.</text>
</comment>
<comment type="subunit">
    <text evidence="2">Part of the 30S ribosomal subunit. Contacts proteins S8 and S17. May interact with IF1 in the 30S initiation complex.</text>
</comment>
<comment type="similarity">
    <text evidence="2">Belongs to the universal ribosomal protein uS12 family.</text>
</comment>
<accession>A0PXU1</accession>
<proteinExistence type="inferred from homology"/>
<organism>
    <name type="scientific">Clostridium novyi (strain NT)</name>
    <dbReference type="NCBI Taxonomy" id="386415"/>
    <lineage>
        <taxon>Bacteria</taxon>
        <taxon>Bacillati</taxon>
        <taxon>Bacillota</taxon>
        <taxon>Clostridia</taxon>
        <taxon>Eubacteriales</taxon>
        <taxon>Clostridiaceae</taxon>
        <taxon>Clostridium</taxon>
    </lineage>
</organism>
<dbReference type="EMBL" id="CP000382">
    <property type="protein sequence ID" value="ABK60437.1"/>
    <property type="molecule type" value="Genomic_DNA"/>
</dbReference>
<dbReference type="RefSeq" id="WP_003367791.1">
    <property type="nucleotide sequence ID" value="NC_008593.1"/>
</dbReference>
<dbReference type="SMR" id="A0PXU1"/>
<dbReference type="STRING" id="386415.NT01CX_1110"/>
<dbReference type="GeneID" id="66318471"/>
<dbReference type="KEGG" id="cno:NT01CX_1110"/>
<dbReference type="eggNOG" id="COG0048">
    <property type="taxonomic scope" value="Bacteria"/>
</dbReference>
<dbReference type="HOGENOM" id="CLU_104295_1_2_9"/>
<dbReference type="Proteomes" id="UP000008220">
    <property type="component" value="Chromosome"/>
</dbReference>
<dbReference type="GO" id="GO:0015935">
    <property type="term" value="C:small ribosomal subunit"/>
    <property type="evidence" value="ECO:0007669"/>
    <property type="project" value="InterPro"/>
</dbReference>
<dbReference type="GO" id="GO:0019843">
    <property type="term" value="F:rRNA binding"/>
    <property type="evidence" value="ECO:0007669"/>
    <property type="project" value="UniProtKB-UniRule"/>
</dbReference>
<dbReference type="GO" id="GO:0003735">
    <property type="term" value="F:structural constituent of ribosome"/>
    <property type="evidence" value="ECO:0007669"/>
    <property type="project" value="InterPro"/>
</dbReference>
<dbReference type="GO" id="GO:0000049">
    <property type="term" value="F:tRNA binding"/>
    <property type="evidence" value="ECO:0007669"/>
    <property type="project" value="UniProtKB-UniRule"/>
</dbReference>
<dbReference type="GO" id="GO:0006412">
    <property type="term" value="P:translation"/>
    <property type="evidence" value="ECO:0007669"/>
    <property type="project" value="UniProtKB-UniRule"/>
</dbReference>
<dbReference type="CDD" id="cd03368">
    <property type="entry name" value="Ribosomal_S12"/>
    <property type="match status" value="1"/>
</dbReference>
<dbReference type="FunFam" id="2.40.50.140:FF:000001">
    <property type="entry name" value="30S ribosomal protein S12"/>
    <property type="match status" value="1"/>
</dbReference>
<dbReference type="Gene3D" id="2.40.50.140">
    <property type="entry name" value="Nucleic acid-binding proteins"/>
    <property type="match status" value="1"/>
</dbReference>
<dbReference type="HAMAP" id="MF_00403_B">
    <property type="entry name" value="Ribosomal_uS12_B"/>
    <property type="match status" value="1"/>
</dbReference>
<dbReference type="InterPro" id="IPR012340">
    <property type="entry name" value="NA-bd_OB-fold"/>
</dbReference>
<dbReference type="InterPro" id="IPR006032">
    <property type="entry name" value="Ribosomal_uS12"/>
</dbReference>
<dbReference type="InterPro" id="IPR005679">
    <property type="entry name" value="Ribosomal_uS12_bac"/>
</dbReference>
<dbReference type="NCBIfam" id="TIGR00981">
    <property type="entry name" value="rpsL_bact"/>
    <property type="match status" value="1"/>
</dbReference>
<dbReference type="PANTHER" id="PTHR11652">
    <property type="entry name" value="30S RIBOSOMAL PROTEIN S12 FAMILY MEMBER"/>
    <property type="match status" value="1"/>
</dbReference>
<dbReference type="Pfam" id="PF00164">
    <property type="entry name" value="Ribosom_S12_S23"/>
    <property type="match status" value="1"/>
</dbReference>
<dbReference type="PIRSF" id="PIRSF002133">
    <property type="entry name" value="Ribosomal_S12/S23"/>
    <property type="match status" value="1"/>
</dbReference>
<dbReference type="PRINTS" id="PR01034">
    <property type="entry name" value="RIBOSOMALS12"/>
</dbReference>
<dbReference type="SUPFAM" id="SSF50249">
    <property type="entry name" value="Nucleic acid-binding proteins"/>
    <property type="match status" value="1"/>
</dbReference>
<dbReference type="PROSITE" id="PS00055">
    <property type="entry name" value="RIBOSOMAL_S12"/>
    <property type="match status" value="1"/>
</dbReference>
<evidence type="ECO:0000250" key="1"/>
<evidence type="ECO:0000255" key="2">
    <source>
        <dbReference type="HAMAP-Rule" id="MF_00403"/>
    </source>
</evidence>
<evidence type="ECO:0000305" key="3"/>
<reference key="1">
    <citation type="journal article" date="2006" name="Nat. Biotechnol.">
        <title>The genome and transcriptomes of the anti-tumor agent Clostridium novyi-NT.</title>
        <authorList>
            <person name="Bettegowda C."/>
            <person name="Huang X."/>
            <person name="Lin J."/>
            <person name="Cheong I."/>
            <person name="Kohli M."/>
            <person name="Szabo S.A."/>
            <person name="Zhang X."/>
            <person name="Diaz L.A. Jr."/>
            <person name="Velculescu V.E."/>
            <person name="Parmigiani G."/>
            <person name="Kinzler K.W."/>
            <person name="Vogelstein B."/>
            <person name="Zhou S."/>
        </authorList>
    </citation>
    <scope>NUCLEOTIDE SEQUENCE [LARGE SCALE GENOMIC DNA]</scope>
    <source>
        <strain>NT</strain>
    </source>
</reference>
<keyword id="KW-0488">Methylation</keyword>
<keyword id="KW-1185">Reference proteome</keyword>
<keyword id="KW-0687">Ribonucleoprotein</keyword>
<keyword id="KW-0689">Ribosomal protein</keyword>
<keyword id="KW-0694">RNA-binding</keyword>
<keyword id="KW-0699">rRNA-binding</keyword>
<keyword id="KW-0820">tRNA-binding</keyword>
<sequence>MPTINQLVRKGRKTAEYKSNSPALKQCPQKRGVCTVVKTSTPKKPNSALRKVARVRLTNGYEVTAYIPGIGHNLQEHSVVLIRGGRVKDLPGVRYHIVRGALDAAGVANRMQARSKYGAKKPKQK</sequence>